<comment type="function">
    <text evidence="4">Odorant receptor.</text>
</comment>
<comment type="subcellular location">
    <subcellularLocation>
        <location evidence="4">Cell membrane</location>
        <topology evidence="1">Multi-pass membrane protein</topology>
    </subcellularLocation>
</comment>
<comment type="similarity">
    <text evidence="2">Belongs to the G-protein coupled receptor 1 family.</text>
</comment>
<comment type="online information" name="Human Olfactory Receptor Data Exploratorium (HORDE)">
    <link uri="http://genome.weizmann.ac.il/horde/card/index/symbol:OR1J1"/>
</comment>
<protein>
    <recommendedName>
        <fullName evidence="4">Olfactory receptor 1J1</fullName>
    </recommendedName>
    <alternativeName>
        <fullName>Olfactory receptor OR9-18</fullName>
    </alternativeName>
</protein>
<feature type="chain" id="PRO_0000150438" description="Olfactory receptor 1J1">
    <location>
        <begin position="1"/>
        <end position="322"/>
    </location>
</feature>
<feature type="topological domain" description="Extracellular" evidence="1">
    <location>
        <begin position="1"/>
        <end position="25"/>
    </location>
</feature>
<feature type="transmembrane region" description="Helical; Name=1" evidence="1">
    <location>
        <begin position="26"/>
        <end position="49"/>
    </location>
</feature>
<feature type="topological domain" description="Cytoplasmic" evidence="1">
    <location>
        <begin position="50"/>
        <end position="57"/>
    </location>
</feature>
<feature type="transmembrane region" description="Helical; Name=2" evidence="1">
    <location>
        <begin position="58"/>
        <end position="79"/>
    </location>
</feature>
<feature type="topological domain" description="Extracellular" evidence="1">
    <location>
        <begin position="80"/>
        <end position="100"/>
    </location>
</feature>
<feature type="transmembrane region" description="Helical; Name=3" evidence="1">
    <location>
        <begin position="101"/>
        <end position="120"/>
    </location>
</feature>
<feature type="topological domain" description="Cytoplasmic" evidence="1">
    <location>
        <begin position="121"/>
        <end position="139"/>
    </location>
</feature>
<feature type="transmembrane region" description="Helical; Name=4" evidence="1">
    <location>
        <begin position="140"/>
        <end position="158"/>
    </location>
</feature>
<feature type="topological domain" description="Extracellular" evidence="1">
    <location>
        <begin position="159"/>
        <end position="196"/>
    </location>
</feature>
<feature type="transmembrane region" description="Helical; Name=5" evidence="1">
    <location>
        <begin position="197"/>
        <end position="219"/>
    </location>
</feature>
<feature type="topological domain" description="Cytoplasmic" evidence="1">
    <location>
        <begin position="220"/>
        <end position="236"/>
    </location>
</feature>
<feature type="transmembrane region" description="Helical; Name=6" evidence="1">
    <location>
        <begin position="237"/>
        <end position="259"/>
    </location>
</feature>
<feature type="topological domain" description="Extracellular" evidence="1">
    <location>
        <begin position="260"/>
        <end position="272"/>
    </location>
</feature>
<feature type="transmembrane region" description="Helical; Name=7" evidence="1">
    <location>
        <begin position="273"/>
        <end position="292"/>
    </location>
</feature>
<feature type="topological domain" description="Cytoplasmic" evidence="1">
    <location>
        <begin position="293"/>
        <end position="322"/>
    </location>
</feature>
<feature type="glycosylation site" description="N-linked (GlcNAc...) asparagine" evidence="1">
    <location>
        <position position="5"/>
    </location>
</feature>
<feature type="disulfide bond" evidence="2">
    <location>
        <begin position="97"/>
        <end position="189"/>
    </location>
</feature>
<feature type="sequence variant" id="VAR_059978" description="In dbSNP:rs1962091." evidence="3">
    <original>N</original>
    <variation>S</variation>
    <location>
        <position position="318"/>
    </location>
</feature>
<organism>
    <name type="scientific">Homo sapiens</name>
    <name type="common">Human</name>
    <dbReference type="NCBI Taxonomy" id="9606"/>
    <lineage>
        <taxon>Eukaryota</taxon>
        <taxon>Metazoa</taxon>
        <taxon>Chordata</taxon>
        <taxon>Craniata</taxon>
        <taxon>Vertebrata</taxon>
        <taxon>Euteleostomi</taxon>
        <taxon>Mammalia</taxon>
        <taxon>Eutheria</taxon>
        <taxon>Euarchontoglires</taxon>
        <taxon>Primates</taxon>
        <taxon>Haplorrhini</taxon>
        <taxon>Catarrhini</taxon>
        <taxon>Hominidae</taxon>
        <taxon>Homo</taxon>
    </lineage>
</organism>
<evidence type="ECO:0000255" key="1"/>
<evidence type="ECO:0000255" key="2">
    <source>
        <dbReference type="PROSITE-ProRule" id="PRU00521"/>
    </source>
</evidence>
<evidence type="ECO:0000269" key="3">
    <source>
    </source>
</evidence>
<evidence type="ECO:0000305" key="4"/>
<evidence type="ECO:0000312" key="5">
    <source>
        <dbReference type="HGNC" id="HGNC:8208"/>
    </source>
</evidence>
<gene>
    <name evidence="5" type="primary">OR1J1</name>
</gene>
<dbReference type="EMBL" id="AB065716">
    <property type="protein sequence ID" value="BAC05937.1"/>
    <property type="molecule type" value="Genomic_DNA"/>
</dbReference>
<dbReference type="EMBL" id="AL353767">
    <property type="status" value="NOT_ANNOTATED_CDS"/>
    <property type="molecule type" value="Genomic_DNA"/>
</dbReference>
<dbReference type="EMBL" id="AL359636">
    <property type="status" value="NOT_ANNOTATED_CDS"/>
    <property type="molecule type" value="Genomic_DNA"/>
</dbReference>
<dbReference type="EMBL" id="BC136933">
    <property type="protein sequence ID" value="AAI36934.1"/>
    <property type="molecule type" value="mRNA"/>
</dbReference>
<dbReference type="EMBL" id="BC136938">
    <property type="protein sequence ID" value="AAI36939.1"/>
    <property type="molecule type" value="mRNA"/>
</dbReference>
<dbReference type="EMBL" id="AF399554">
    <property type="protein sequence ID" value="AAK95039.1"/>
    <property type="molecule type" value="Genomic_DNA"/>
</dbReference>
<dbReference type="EMBL" id="BK004452">
    <property type="protein sequence ID" value="DAA04850.1"/>
    <property type="molecule type" value="Genomic_DNA"/>
</dbReference>
<dbReference type="CCDS" id="CCDS35120.1"/>
<dbReference type="RefSeq" id="NP_001004451.1">
    <property type="nucleotide sequence ID" value="NM_001004451.1"/>
</dbReference>
<dbReference type="SMR" id="Q8NGS3"/>
<dbReference type="FunCoup" id="Q8NGS3">
    <property type="interactions" value="560"/>
</dbReference>
<dbReference type="STRING" id="9606.ENSP00000259357"/>
<dbReference type="GlyCosmos" id="Q8NGS3">
    <property type="glycosylation" value="1 site, No reported glycans"/>
</dbReference>
<dbReference type="GlyGen" id="Q8NGS3">
    <property type="glycosylation" value="2 sites"/>
</dbReference>
<dbReference type="iPTMnet" id="Q8NGS3"/>
<dbReference type="PhosphoSitePlus" id="Q8NGS3"/>
<dbReference type="BioMuta" id="OR1J1"/>
<dbReference type="DMDM" id="38372762"/>
<dbReference type="MassIVE" id="Q8NGS3"/>
<dbReference type="PaxDb" id="9606-ENSP00000259357"/>
<dbReference type="Antibodypedia" id="30306">
    <property type="antibodies" value="49 antibodies from 17 providers"/>
</dbReference>
<dbReference type="DNASU" id="347168"/>
<dbReference type="Ensembl" id="ENST00000259357.3">
    <property type="protein sequence ID" value="ENSP00000259357.2"/>
    <property type="gene ID" value="ENSG00000136834.3"/>
</dbReference>
<dbReference type="GeneID" id="347168"/>
<dbReference type="KEGG" id="hsa:347168"/>
<dbReference type="MANE-Select" id="ENST00000259357.3">
    <property type="protein sequence ID" value="ENSP00000259357.2"/>
    <property type="RefSeq nucleotide sequence ID" value="NM_001004451.1"/>
    <property type="RefSeq protein sequence ID" value="NP_001004451.1"/>
</dbReference>
<dbReference type="UCSC" id="uc011lyu.2">
    <property type="organism name" value="human"/>
</dbReference>
<dbReference type="AGR" id="HGNC:8208"/>
<dbReference type="CTD" id="347168"/>
<dbReference type="GeneCards" id="OR1J1"/>
<dbReference type="HGNC" id="HGNC:8208">
    <property type="gene designation" value="OR1J1"/>
</dbReference>
<dbReference type="HPA" id="ENSG00000136834">
    <property type="expression patterns" value="Not detected"/>
</dbReference>
<dbReference type="neXtProt" id="NX_Q8NGS3"/>
<dbReference type="OpenTargets" id="ENSG00000136834"/>
<dbReference type="PharmGKB" id="PA32079"/>
<dbReference type="VEuPathDB" id="HostDB:ENSG00000136834"/>
<dbReference type="eggNOG" id="ENOG502QVH7">
    <property type="taxonomic scope" value="Eukaryota"/>
</dbReference>
<dbReference type="GeneTree" id="ENSGT00940000163027"/>
<dbReference type="HOGENOM" id="CLU_012526_1_3_1"/>
<dbReference type="InParanoid" id="Q8NGS3"/>
<dbReference type="OMA" id="IVPHFFC"/>
<dbReference type="OrthoDB" id="9975554at2759"/>
<dbReference type="PAN-GO" id="Q8NGS3">
    <property type="GO annotations" value="3 GO annotations based on evolutionary models"/>
</dbReference>
<dbReference type="PhylomeDB" id="Q8NGS3"/>
<dbReference type="TreeFam" id="TF337210"/>
<dbReference type="PathwayCommons" id="Q8NGS3"/>
<dbReference type="Reactome" id="R-HSA-9752946">
    <property type="pathway name" value="Expression and translocation of olfactory receptors"/>
</dbReference>
<dbReference type="BioGRID-ORCS" id="347168">
    <property type="hits" value="243 hits in 743 CRISPR screens"/>
</dbReference>
<dbReference type="GeneWiki" id="OR1J1"/>
<dbReference type="GenomeRNAi" id="347168"/>
<dbReference type="Pharos" id="Q8NGS3">
    <property type="development level" value="Tdark"/>
</dbReference>
<dbReference type="PRO" id="PR:Q8NGS3"/>
<dbReference type="Proteomes" id="UP000005640">
    <property type="component" value="Chromosome 9"/>
</dbReference>
<dbReference type="RNAct" id="Q8NGS3">
    <property type="molecule type" value="protein"/>
</dbReference>
<dbReference type="Bgee" id="ENSG00000136834">
    <property type="expression patterns" value="Expressed in male germ line stem cell (sensu Vertebrata) in testis and 6 other cell types or tissues"/>
</dbReference>
<dbReference type="ExpressionAtlas" id="Q8NGS3">
    <property type="expression patterns" value="baseline and differential"/>
</dbReference>
<dbReference type="GO" id="GO:0005886">
    <property type="term" value="C:plasma membrane"/>
    <property type="evidence" value="ECO:0000318"/>
    <property type="project" value="GO_Central"/>
</dbReference>
<dbReference type="GO" id="GO:0004930">
    <property type="term" value="F:G protein-coupled receptor activity"/>
    <property type="evidence" value="ECO:0007669"/>
    <property type="project" value="UniProtKB-KW"/>
</dbReference>
<dbReference type="GO" id="GO:0004984">
    <property type="term" value="F:olfactory receptor activity"/>
    <property type="evidence" value="ECO:0000318"/>
    <property type="project" value="GO_Central"/>
</dbReference>
<dbReference type="GO" id="GO:0007165">
    <property type="term" value="P:signal transduction"/>
    <property type="evidence" value="ECO:0000318"/>
    <property type="project" value="GO_Central"/>
</dbReference>
<dbReference type="CDD" id="cd15236">
    <property type="entry name" value="7tmA_OR1E-like"/>
    <property type="match status" value="1"/>
</dbReference>
<dbReference type="FunFam" id="1.20.1070.10:FF:000009">
    <property type="entry name" value="Olfactory receptor"/>
    <property type="match status" value="1"/>
</dbReference>
<dbReference type="Gene3D" id="1.20.1070.10">
    <property type="entry name" value="Rhodopsin 7-helix transmembrane proteins"/>
    <property type="match status" value="1"/>
</dbReference>
<dbReference type="InterPro" id="IPR000276">
    <property type="entry name" value="GPCR_Rhodpsn"/>
</dbReference>
<dbReference type="InterPro" id="IPR017452">
    <property type="entry name" value="GPCR_Rhodpsn_7TM"/>
</dbReference>
<dbReference type="InterPro" id="IPR000725">
    <property type="entry name" value="Olfact_rcpt"/>
</dbReference>
<dbReference type="PANTHER" id="PTHR48001">
    <property type="entry name" value="OLFACTORY RECEPTOR"/>
    <property type="match status" value="1"/>
</dbReference>
<dbReference type="Pfam" id="PF13853">
    <property type="entry name" value="7tm_4"/>
    <property type="match status" value="1"/>
</dbReference>
<dbReference type="PRINTS" id="PR00237">
    <property type="entry name" value="GPCRRHODOPSN"/>
</dbReference>
<dbReference type="PRINTS" id="PR00245">
    <property type="entry name" value="OLFACTORYR"/>
</dbReference>
<dbReference type="SUPFAM" id="SSF81321">
    <property type="entry name" value="Family A G protein-coupled receptor-like"/>
    <property type="match status" value="1"/>
</dbReference>
<dbReference type="PROSITE" id="PS00237">
    <property type="entry name" value="G_PROTEIN_RECEP_F1_1"/>
    <property type="match status" value="1"/>
</dbReference>
<dbReference type="PROSITE" id="PS50262">
    <property type="entry name" value="G_PROTEIN_RECEP_F1_2"/>
    <property type="match status" value="1"/>
</dbReference>
<reference key="1">
    <citation type="submission" date="2001-07" db="EMBL/GenBank/DDBJ databases">
        <title>Genome-wide discovery and analysis of human seven transmembrane helix receptor genes.</title>
        <authorList>
            <person name="Suwa M."/>
            <person name="Sato T."/>
            <person name="Okouchi I."/>
            <person name="Arita M."/>
            <person name="Futami K."/>
            <person name="Matsumoto S."/>
            <person name="Tsutsumi S."/>
            <person name="Aburatani H."/>
            <person name="Asai K."/>
            <person name="Akiyama Y."/>
        </authorList>
    </citation>
    <scope>NUCLEOTIDE SEQUENCE [GENOMIC DNA]</scope>
</reference>
<reference key="2">
    <citation type="journal article" date="2004" name="Nature">
        <title>DNA sequence and analysis of human chromosome 9.</title>
        <authorList>
            <person name="Humphray S.J."/>
            <person name="Oliver K."/>
            <person name="Hunt A.R."/>
            <person name="Plumb R.W."/>
            <person name="Loveland J.E."/>
            <person name="Howe K.L."/>
            <person name="Andrews T.D."/>
            <person name="Searle S."/>
            <person name="Hunt S.E."/>
            <person name="Scott C.E."/>
            <person name="Jones M.C."/>
            <person name="Ainscough R."/>
            <person name="Almeida J.P."/>
            <person name="Ambrose K.D."/>
            <person name="Ashwell R.I.S."/>
            <person name="Babbage A.K."/>
            <person name="Babbage S."/>
            <person name="Bagguley C.L."/>
            <person name="Bailey J."/>
            <person name="Banerjee R."/>
            <person name="Barker D.J."/>
            <person name="Barlow K.F."/>
            <person name="Bates K."/>
            <person name="Beasley H."/>
            <person name="Beasley O."/>
            <person name="Bird C.P."/>
            <person name="Bray-Allen S."/>
            <person name="Brown A.J."/>
            <person name="Brown J.Y."/>
            <person name="Burford D."/>
            <person name="Burrill W."/>
            <person name="Burton J."/>
            <person name="Carder C."/>
            <person name="Carter N.P."/>
            <person name="Chapman J.C."/>
            <person name="Chen Y."/>
            <person name="Clarke G."/>
            <person name="Clark S.Y."/>
            <person name="Clee C.M."/>
            <person name="Clegg S."/>
            <person name="Collier R.E."/>
            <person name="Corby N."/>
            <person name="Crosier M."/>
            <person name="Cummings A.T."/>
            <person name="Davies J."/>
            <person name="Dhami P."/>
            <person name="Dunn M."/>
            <person name="Dutta I."/>
            <person name="Dyer L.W."/>
            <person name="Earthrowl M.E."/>
            <person name="Faulkner L."/>
            <person name="Fleming C.J."/>
            <person name="Frankish A."/>
            <person name="Frankland J.A."/>
            <person name="French L."/>
            <person name="Fricker D.G."/>
            <person name="Garner P."/>
            <person name="Garnett J."/>
            <person name="Ghori J."/>
            <person name="Gilbert J.G.R."/>
            <person name="Glison C."/>
            <person name="Grafham D.V."/>
            <person name="Gribble S."/>
            <person name="Griffiths C."/>
            <person name="Griffiths-Jones S."/>
            <person name="Grocock R."/>
            <person name="Guy J."/>
            <person name="Hall R.E."/>
            <person name="Hammond S."/>
            <person name="Harley J.L."/>
            <person name="Harrison E.S.I."/>
            <person name="Hart E.A."/>
            <person name="Heath P.D."/>
            <person name="Henderson C.D."/>
            <person name="Hopkins B.L."/>
            <person name="Howard P.J."/>
            <person name="Howden P.J."/>
            <person name="Huckle E."/>
            <person name="Johnson C."/>
            <person name="Johnson D."/>
            <person name="Joy A.A."/>
            <person name="Kay M."/>
            <person name="Keenan S."/>
            <person name="Kershaw J.K."/>
            <person name="Kimberley A.M."/>
            <person name="King A."/>
            <person name="Knights A."/>
            <person name="Laird G.K."/>
            <person name="Langford C."/>
            <person name="Lawlor S."/>
            <person name="Leongamornlert D.A."/>
            <person name="Leversha M."/>
            <person name="Lloyd C."/>
            <person name="Lloyd D.M."/>
            <person name="Lovell J."/>
            <person name="Martin S."/>
            <person name="Mashreghi-Mohammadi M."/>
            <person name="Matthews L."/>
            <person name="McLaren S."/>
            <person name="McLay K.E."/>
            <person name="McMurray A."/>
            <person name="Milne S."/>
            <person name="Nickerson T."/>
            <person name="Nisbett J."/>
            <person name="Nordsiek G."/>
            <person name="Pearce A.V."/>
            <person name="Peck A.I."/>
            <person name="Porter K.M."/>
            <person name="Pandian R."/>
            <person name="Pelan S."/>
            <person name="Phillimore B."/>
            <person name="Povey S."/>
            <person name="Ramsey Y."/>
            <person name="Rand V."/>
            <person name="Scharfe M."/>
            <person name="Sehra H.K."/>
            <person name="Shownkeen R."/>
            <person name="Sims S.K."/>
            <person name="Skuce C.D."/>
            <person name="Smith M."/>
            <person name="Steward C.A."/>
            <person name="Swarbreck D."/>
            <person name="Sycamore N."/>
            <person name="Tester J."/>
            <person name="Thorpe A."/>
            <person name="Tracey A."/>
            <person name="Tromans A."/>
            <person name="Thomas D.W."/>
            <person name="Wall M."/>
            <person name="Wallis J.M."/>
            <person name="West A.P."/>
            <person name="Whitehead S.L."/>
            <person name="Willey D.L."/>
            <person name="Williams S.A."/>
            <person name="Wilming L."/>
            <person name="Wray P.W."/>
            <person name="Young L."/>
            <person name="Ashurst J.L."/>
            <person name="Coulson A."/>
            <person name="Blocker H."/>
            <person name="Durbin R.M."/>
            <person name="Sulston J.E."/>
            <person name="Hubbard T."/>
            <person name="Jackson M.J."/>
            <person name="Bentley D.R."/>
            <person name="Beck S."/>
            <person name="Rogers J."/>
            <person name="Dunham I."/>
        </authorList>
    </citation>
    <scope>NUCLEOTIDE SEQUENCE [LARGE SCALE GENOMIC DNA]</scope>
    <scope>VARIANT SER-318</scope>
</reference>
<reference key="3">
    <citation type="journal article" date="2004" name="Genome Res.">
        <title>The status, quality, and expansion of the NIH full-length cDNA project: the Mammalian Gene Collection (MGC).</title>
        <authorList>
            <consortium name="The MGC Project Team"/>
        </authorList>
    </citation>
    <scope>NUCLEOTIDE SEQUENCE [LARGE SCALE MRNA]</scope>
</reference>
<reference key="4">
    <citation type="journal article" date="2002" name="Genomics">
        <title>DEFOG: a practical scheme for deciphering families of genes.</title>
        <authorList>
            <person name="Fuchs T."/>
            <person name="Malecova B."/>
            <person name="Linhart C."/>
            <person name="Sharan R."/>
            <person name="Khen M."/>
            <person name="Herwig R."/>
            <person name="Shmulevich D."/>
            <person name="Elkon R."/>
            <person name="Steinfath M."/>
            <person name="O'Brien J.K."/>
            <person name="Radelof U."/>
            <person name="Lehrach H."/>
            <person name="Lancet D."/>
            <person name="Shamir R."/>
        </authorList>
    </citation>
    <scope>NUCLEOTIDE SEQUENCE [GENOMIC DNA] OF 68-283</scope>
</reference>
<reference key="5">
    <citation type="journal article" date="2004" name="Proc. Natl. Acad. Sci. U.S.A.">
        <title>The human olfactory receptor gene family.</title>
        <authorList>
            <person name="Malnic B."/>
            <person name="Godfrey P.A."/>
            <person name="Buck L.B."/>
        </authorList>
    </citation>
    <scope>IDENTIFICATION</scope>
</reference>
<reference key="6">
    <citation type="journal article" date="2004" name="Proc. Natl. Acad. Sci. U.S.A.">
        <authorList>
            <person name="Malnic B."/>
            <person name="Godfrey P.A."/>
            <person name="Buck L.B."/>
        </authorList>
    </citation>
    <scope>ERRATUM OF PUBMED:14983052</scope>
</reference>
<sequence>MSPENQSSVSEFLLLGLPIRPEQQAVFFALFLGMYLTTVLGNLLIMLLIQLDSHLHTPMYFFLSHLALTDISFSSVTVPKMLMNMQTQHLAVFYKGCISQTYFFIFFADLDSFLITSMAYDRYVAICHPLHYATIMTQSQCVMLVAGSWVIACACALLHTLLLAQLSFCADHIIPHYFCDLGALLKLSCSDTSLNQLAIFTAALTAIMLPFLCILVSYGHIGVTILQIPSTKGICKALSTCGSHLSVVTIYYRTIIGLYFLPPSSNTNDKNIIASVIYTAVTPMLNPFIYSLRNKDIKGALRKLLSRSGAVAHACNLNTLGG</sequence>
<proteinExistence type="evidence at transcript level"/>
<name>OR1J1_HUMAN</name>
<keyword id="KW-1003">Cell membrane</keyword>
<keyword id="KW-1015">Disulfide bond</keyword>
<keyword id="KW-0297">G-protein coupled receptor</keyword>
<keyword id="KW-0325">Glycoprotein</keyword>
<keyword id="KW-0472">Membrane</keyword>
<keyword id="KW-0552">Olfaction</keyword>
<keyword id="KW-0675">Receptor</keyword>
<keyword id="KW-1185">Reference proteome</keyword>
<keyword id="KW-0716">Sensory transduction</keyword>
<keyword id="KW-0807">Transducer</keyword>
<keyword id="KW-0812">Transmembrane</keyword>
<keyword id="KW-1133">Transmembrane helix</keyword>
<accession>Q8NGS3</accession>
<accession>A3KFL8</accession>
<accession>Q6IF10</accession>
<accession>Q96R88</accession>